<accession>Q9RW94</accession>
<comment type="function">
    <text evidence="1">Catalyzes the anti-1,4-elimination of the C-3 phosphate and the C-6 proR hydrogen from 5-enolpyruvylshikimate-3-phosphate (EPSP) to yield chorismate, which is the branch point compound that serves as the starting substrate for the three terminal pathways of aromatic amino acid biosynthesis. This reaction introduces a second double bond into the aromatic ring system.</text>
</comment>
<comment type="catalytic activity">
    <reaction evidence="1">
        <text>5-O-(1-carboxyvinyl)-3-phosphoshikimate = chorismate + phosphate</text>
        <dbReference type="Rhea" id="RHEA:21020"/>
        <dbReference type="ChEBI" id="CHEBI:29748"/>
        <dbReference type="ChEBI" id="CHEBI:43474"/>
        <dbReference type="ChEBI" id="CHEBI:57701"/>
        <dbReference type="EC" id="4.2.3.5"/>
    </reaction>
</comment>
<comment type="cofactor">
    <cofactor evidence="1">
        <name>FMNH2</name>
        <dbReference type="ChEBI" id="CHEBI:57618"/>
    </cofactor>
    <text evidence="1">Reduced FMN (FMNH(2)).</text>
</comment>
<comment type="pathway">
    <text evidence="1">Metabolic intermediate biosynthesis; chorismate biosynthesis; chorismate from D-erythrose 4-phosphate and phosphoenolpyruvate: step 7/7.</text>
</comment>
<comment type="subunit">
    <text evidence="1">Homotetramer.</text>
</comment>
<comment type="similarity">
    <text evidence="1">Belongs to the chorismate synthase family.</text>
</comment>
<comment type="sequence caution" evidence="3">
    <conflict type="erroneous initiation">
        <sequence resource="EMBL-CDS" id="AAF10351"/>
    </conflict>
    <text>Extended N-terminus.</text>
</comment>
<reference key="1">
    <citation type="journal article" date="1999" name="Science">
        <title>Genome sequence of the radioresistant bacterium Deinococcus radiodurans R1.</title>
        <authorList>
            <person name="White O."/>
            <person name="Eisen J.A."/>
            <person name="Heidelberg J.F."/>
            <person name="Hickey E.K."/>
            <person name="Peterson J.D."/>
            <person name="Dodson R.J."/>
            <person name="Haft D.H."/>
            <person name="Gwinn M.L."/>
            <person name="Nelson W.C."/>
            <person name="Richardson D.L."/>
            <person name="Moffat K.S."/>
            <person name="Qin H."/>
            <person name="Jiang L."/>
            <person name="Pamphile W."/>
            <person name="Crosby M."/>
            <person name="Shen M."/>
            <person name="Vamathevan J.J."/>
            <person name="Lam P."/>
            <person name="McDonald L.A."/>
            <person name="Utterback T.R."/>
            <person name="Zalewski C."/>
            <person name="Makarova K.S."/>
            <person name="Aravind L."/>
            <person name="Daly M.J."/>
            <person name="Minton K.W."/>
            <person name="Fleischmann R.D."/>
            <person name="Ketchum K.A."/>
            <person name="Nelson K.E."/>
            <person name="Salzberg S.L."/>
            <person name="Smith H.O."/>
            <person name="Venter J.C."/>
            <person name="Fraser C.M."/>
        </authorList>
    </citation>
    <scope>NUCLEOTIDE SEQUENCE [LARGE SCALE GENOMIC DNA]</scope>
    <source>
        <strain>ATCC 13939 / DSM 20539 / JCM 16871 / CCUG 27074 / LMG 4051 / NBRC 15346 / NCIMB 9279 / VKM B-1422 / R1</strain>
    </source>
</reference>
<protein>
    <recommendedName>
        <fullName evidence="1">Chorismate synthase</fullName>
        <shortName evidence="1">CS</shortName>
        <ecNumber evidence="1">4.2.3.5</ecNumber>
    </recommendedName>
    <alternativeName>
        <fullName evidence="1">5-enolpyruvylshikimate-3-phosphate phospholyase</fullName>
    </alternativeName>
</protein>
<keyword id="KW-0028">Amino-acid biosynthesis</keyword>
<keyword id="KW-0057">Aromatic amino acid biosynthesis</keyword>
<keyword id="KW-0274">FAD</keyword>
<keyword id="KW-0285">Flavoprotein</keyword>
<keyword id="KW-0288">FMN</keyword>
<keyword id="KW-0456">Lyase</keyword>
<keyword id="KW-0521">NADP</keyword>
<keyword id="KW-1185">Reference proteome</keyword>
<dbReference type="EC" id="4.2.3.5" evidence="1"/>
<dbReference type="EMBL" id="AE000513">
    <property type="protein sequence ID" value="AAF10351.1"/>
    <property type="status" value="ALT_INIT"/>
    <property type="molecule type" value="Genomic_DNA"/>
</dbReference>
<dbReference type="PIR" id="H75477">
    <property type="entry name" value="H75477"/>
</dbReference>
<dbReference type="RefSeq" id="NP_294499.2">
    <property type="nucleotide sequence ID" value="NC_001263.1"/>
</dbReference>
<dbReference type="RefSeq" id="WP_010887421.1">
    <property type="nucleotide sequence ID" value="NC_001263.1"/>
</dbReference>
<dbReference type="SMR" id="Q9RW94"/>
<dbReference type="FunCoup" id="Q9RW94">
    <property type="interactions" value="439"/>
</dbReference>
<dbReference type="STRING" id="243230.DR_0775"/>
<dbReference type="PaxDb" id="243230-DR_0775"/>
<dbReference type="EnsemblBacteria" id="AAF10351">
    <property type="protein sequence ID" value="AAF10351"/>
    <property type="gene ID" value="DR_0775"/>
</dbReference>
<dbReference type="GeneID" id="69517020"/>
<dbReference type="KEGG" id="dra:DR_0775"/>
<dbReference type="PATRIC" id="fig|243230.17.peg.955"/>
<dbReference type="eggNOG" id="COG0082">
    <property type="taxonomic scope" value="Bacteria"/>
</dbReference>
<dbReference type="HOGENOM" id="CLU_034547_2_0_0"/>
<dbReference type="InParanoid" id="Q9RW94"/>
<dbReference type="OrthoDB" id="9771806at2"/>
<dbReference type="UniPathway" id="UPA00053">
    <property type="reaction ID" value="UER00090"/>
</dbReference>
<dbReference type="Proteomes" id="UP000002524">
    <property type="component" value="Chromosome 1"/>
</dbReference>
<dbReference type="GO" id="GO:0005829">
    <property type="term" value="C:cytosol"/>
    <property type="evidence" value="ECO:0000318"/>
    <property type="project" value="GO_Central"/>
</dbReference>
<dbReference type="GO" id="GO:0004107">
    <property type="term" value="F:chorismate synthase activity"/>
    <property type="evidence" value="ECO:0000318"/>
    <property type="project" value="GO_Central"/>
</dbReference>
<dbReference type="GO" id="GO:0010181">
    <property type="term" value="F:FMN binding"/>
    <property type="evidence" value="ECO:0000318"/>
    <property type="project" value="GO_Central"/>
</dbReference>
<dbReference type="GO" id="GO:0008652">
    <property type="term" value="P:amino acid biosynthetic process"/>
    <property type="evidence" value="ECO:0007669"/>
    <property type="project" value="UniProtKB-KW"/>
</dbReference>
<dbReference type="GO" id="GO:0009073">
    <property type="term" value="P:aromatic amino acid family biosynthetic process"/>
    <property type="evidence" value="ECO:0000318"/>
    <property type="project" value="GO_Central"/>
</dbReference>
<dbReference type="GO" id="GO:0009423">
    <property type="term" value="P:chorismate biosynthetic process"/>
    <property type="evidence" value="ECO:0000318"/>
    <property type="project" value="GO_Central"/>
</dbReference>
<dbReference type="CDD" id="cd07304">
    <property type="entry name" value="Chorismate_synthase"/>
    <property type="match status" value="1"/>
</dbReference>
<dbReference type="FunFam" id="3.60.150.10:FF:000002">
    <property type="entry name" value="Chorismate synthase"/>
    <property type="match status" value="1"/>
</dbReference>
<dbReference type="Gene3D" id="3.60.150.10">
    <property type="entry name" value="Chorismate synthase AroC"/>
    <property type="match status" value="1"/>
</dbReference>
<dbReference type="HAMAP" id="MF_00300">
    <property type="entry name" value="Chorismate_synth"/>
    <property type="match status" value="1"/>
</dbReference>
<dbReference type="InterPro" id="IPR000453">
    <property type="entry name" value="Chorismate_synth"/>
</dbReference>
<dbReference type="InterPro" id="IPR035904">
    <property type="entry name" value="Chorismate_synth_AroC_sf"/>
</dbReference>
<dbReference type="InterPro" id="IPR020541">
    <property type="entry name" value="Chorismate_synthase_CS"/>
</dbReference>
<dbReference type="NCBIfam" id="TIGR00033">
    <property type="entry name" value="aroC"/>
    <property type="match status" value="1"/>
</dbReference>
<dbReference type="NCBIfam" id="NF003793">
    <property type="entry name" value="PRK05382.1"/>
    <property type="match status" value="1"/>
</dbReference>
<dbReference type="PANTHER" id="PTHR21085">
    <property type="entry name" value="CHORISMATE SYNTHASE"/>
    <property type="match status" value="1"/>
</dbReference>
<dbReference type="PANTHER" id="PTHR21085:SF0">
    <property type="entry name" value="CHORISMATE SYNTHASE"/>
    <property type="match status" value="1"/>
</dbReference>
<dbReference type="Pfam" id="PF01264">
    <property type="entry name" value="Chorismate_synt"/>
    <property type="match status" value="1"/>
</dbReference>
<dbReference type="PIRSF" id="PIRSF001456">
    <property type="entry name" value="Chorismate_synth"/>
    <property type="match status" value="1"/>
</dbReference>
<dbReference type="SUPFAM" id="SSF103263">
    <property type="entry name" value="Chorismate synthase, AroC"/>
    <property type="match status" value="1"/>
</dbReference>
<dbReference type="PROSITE" id="PS00787">
    <property type="entry name" value="CHORISMATE_SYNTHASE_1"/>
    <property type="match status" value="1"/>
</dbReference>
<dbReference type="PROSITE" id="PS00788">
    <property type="entry name" value="CHORISMATE_SYNTHASE_2"/>
    <property type="match status" value="1"/>
</dbReference>
<proteinExistence type="inferred from homology"/>
<feature type="chain" id="PRO_0000140581" description="Chorismate synthase">
    <location>
        <begin position="1"/>
        <end position="382"/>
    </location>
</feature>
<feature type="region of interest" description="Disordered" evidence="2">
    <location>
        <begin position="89"/>
        <end position="113"/>
    </location>
</feature>
<feature type="compositionally biased region" description="Basic and acidic residues" evidence="2">
    <location>
        <begin position="94"/>
        <end position="108"/>
    </location>
</feature>
<feature type="binding site" evidence="1">
    <location>
        <position position="39"/>
    </location>
    <ligand>
        <name>NADP(+)</name>
        <dbReference type="ChEBI" id="CHEBI:58349"/>
    </ligand>
</feature>
<feature type="binding site" evidence="1">
    <location>
        <position position="45"/>
    </location>
    <ligand>
        <name>NADP(+)</name>
        <dbReference type="ChEBI" id="CHEBI:58349"/>
    </ligand>
</feature>
<feature type="binding site" evidence="1">
    <location>
        <begin position="128"/>
        <end position="130"/>
    </location>
    <ligand>
        <name>FMN</name>
        <dbReference type="ChEBI" id="CHEBI:58210"/>
    </ligand>
</feature>
<feature type="binding site" evidence="1">
    <location>
        <begin position="246"/>
        <end position="247"/>
    </location>
    <ligand>
        <name>FMN</name>
        <dbReference type="ChEBI" id="CHEBI:58210"/>
    </ligand>
</feature>
<feature type="binding site" evidence="1">
    <location>
        <position position="290"/>
    </location>
    <ligand>
        <name>FMN</name>
        <dbReference type="ChEBI" id="CHEBI:58210"/>
    </ligand>
</feature>
<feature type="binding site" evidence="1">
    <location>
        <begin position="305"/>
        <end position="309"/>
    </location>
    <ligand>
        <name>FMN</name>
        <dbReference type="ChEBI" id="CHEBI:58210"/>
    </ligand>
</feature>
<feature type="binding site" evidence="1">
    <location>
        <position position="331"/>
    </location>
    <ligand>
        <name>FMN</name>
        <dbReference type="ChEBI" id="CHEBI:58210"/>
    </ligand>
</feature>
<evidence type="ECO:0000255" key="1">
    <source>
        <dbReference type="HAMAP-Rule" id="MF_00300"/>
    </source>
</evidence>
<evidence type="ECO:0000256" key="2">
    <source>
        <dbReference type="SAM" id="MobiDB-lite"/>
    </source>
</evidence>
<evidence type="ECO:0000305" key="3"/>
<sequence>MRYLTAGESHGPQLTAIIEGLPAQLPLGKADIDPWLRKRQGGYGRGRRMVIETDEAELLSGVRAGRTTGAPVTLAIQNKDHRNWTEIMSPEPGGEPRKKALTDARPGHADLTGGIKYRHKDLRDVLERASARETAARVAVGSIALKLLSELGIEGANYVFNLAGIETRQAFSWDALDAIEDSDLRTPDADAAAQMRERIDQAKKDGDTLGGILEVRFRGLPVGLGSFVHYDRKLDGKIAQACLSVQAMKGVEIGRAFENAVKPGSGVHDAIHYREGTYARDTNGAGGLEAGMTNGEELIVRVAMKPIATLMKPLPTVNVVTHEASDAARERSDTTAVPAAGVILQCVIGWVLAEAITEKFGGDTLPELQERLAAARRYAAEY</sequence>
<gene>
    <name evidence="1" type="primary">aroC</name>
    <name type="ordered locus">DR_0775</name>
</gene>
<name>AROC_DEIRA</name>
<organism>
    <name type="scientific">Deinococcus radiodurans (strain ATCC 13939 / DSM 20539 / JCM 16871 / CCUG 27074 / LMG 4051 / NBRC 15346 / NCIMB 9279 / VKM B-1422 / R1)</name>
    <dbReference type="NCBI Taxonomy" id="243230"/>
    <lineage>
        <taxon>Bacteria</taxon>
        <taxon>Thermotogati</taxon>
        <taxon>Deinococcota</taxon>
        <taxon>Deinococci</taxon>
        <taxon>Deinococcales</taxon>
        <taxon>Deinococcaceae</taxon>
        <taxon>Deinococcus</taxon>
    </lineage>
</organism>